<gene>
    <name type="primary">SAP25</name>
</gene>
<dbReference type="EMBL" id="AK074175">
    <property type="protein sequence ID" value="BAB85001.1"/>
    <property type="status" value="ALT_SEQ"/>
    <property type="molecule type" value="mRNA"/>
</dbReference>
<dbReference type="EMBL" id="BC046135">
    <property type="status" value="NOT_ANNOTATED_CDS"/>
    <property type="molecule type" value="mRNA"/>
</dbReference>
<dbReference type="CCDS" id="CCDS55137.1"/>
<dbReference type="RefSeq" id="NP_001335606.1">
    <property type="nucleotide sequence ID" value="NM_001348677.2"/>
</dbReference>
<dbReference type="BioGRID" id="941018">
    <property type="interactions" value="28"/>
</dbReference>
<dbReference type="CORUM" id="Q8TEE9"/>
<dbReference type="FunCoup" id="Q8TEE9">
    <property type="interactions" value="27"/>
</dbReference>
<dbReference type="IntAct" id="Q8TEE9">
    <property type="interactions" value="3"/>
</dbReference>
<dbReference type="MINT" id="Q8TEE9"/>
<dbReference type="STRING" id="9606.ENSP00000481773"/>
<dbReference type="iPTMnet" id="Q8TEE9"/>
<dbReference type="PhosphoSitePlus" id="Q8TEE9"/>
<dbReference type="BioMuta" id="SAP25"/>
<dbReference type="DMDM" id="206558307"/>
<dbReference type="MassIVE" id="Q8TEE9"/>
<dbReference type="PaxDb" id="9606-ENSP00000481351"/>
<dbReference type="PeptideAtlas" id="Q8TEE9"/>
<dbReference type="Antibodypedia" id="71354">
    <property type="antibodies" value="5 antibodies from 5 providers"/>
</dbReference>
<dbReference type="DNASU" id="100316904"/>
<dbReference type="Ensembl" id="ENST00000538735.5">
    <property type="protein sequence ID" value="ENSP00000442339.1"/>
    <property type="gene ID" value="ENSG00000205307.12"/>
</dbReference>
<dbReference type="Ensembl" id="ENST00000614631.4">
    <property type="protein sequence ID" value="ENSP00000481351.1"/>
    <property type="gene ID" value="ENSG00000205307.12"/>
</dbReference>
<dbReference type="GeneID" id="100316904"/>
<dbReference type="KEGG" id="hsa:100316904"/>
<dbReference type="UCSC" id="uc022aip.2">
    <property type="organism name" value="human"/>
</dbReference>
<dbReference type="AGR" id="HGNC:41908"/>
<dbReference type="CTD" id="100316904"/>
<dbReference type="DisGeNET" id="100316904"/>
<dbReference type="GeneCards" id="SAP25"/>
<dbReference type="HGNC" id="HGNC:41908">
    <property type="gene designation" value="SAP25"/>
</dbReference>
<dbReference type="HPA" id="ENSG00000205307">
    <property type="expression patterns" value="Tissue enhanced (lymphoid)"/>
</dbReference>
<dbReference type="MIM" id="619230">
    <property type="type" value="gene"/>
</dbReference>
<dbReference type="neXtProt" id="NX_Q8TEE9"/>
<dbReference type="OpenTargets" id="ENSG00000205307"/>
<dbReference type="VEuPathDB" id="HostDB:ENSG00000205307"/>
<dbReference type="eggNOG" id="ENOG502SWKH">
    <property type="taxonomic scope" value="Eukaryota"/>
</dbReference>
<dbReference type="GeneTree" id="ENSGT00390000007899"/>
<dbReference type="HOGENOM" id="CLU_085239_0_0_1"/>
<dbReference type="InParanoid" id="Q8TEE9"/>
<dbReference type="OMA" id="AGPQPVW"/>
<dbReference type="OrthoDB" id="9945911at2759"/>
<dbReference type="PAN-GO" id="Q8TEE9">
    <property type="GO annotations" value="0 GO annotations based on evolutionary models"/>
</dbReference>
<dbReference type="PhylomeDB" id="Q8TEE9"/>
<dbReference type="TreeFam" id="TF350622"/>
<dbReference type="PathwayCommons" id="Q8TEE9"/>
<dbReference type="SignaLink" id="Q8TEE9"/>
<dbReference type="BioGRID-ORCS" id="100316904">
    <property type="hits" value="14 hits in 1080 CRISPR screens"/>
</dbReference>
<dbReference type="Pharos" id="Q8TEE9">
    <property type="development level" value="Tdark"/>
</dbReference>
<dbReference type="PRO" id="PR:Q8TEE9"/>
<dbReference type="Proteomes" id="UP000005640">
    <property type="component" value="Chromosome 7"/>
</dbReference>
<dbReference type="RNAct" id="Q8TEE9">
    <property type="molecule type" value="protein"/>
</dbReference>
<dbReference type="Bgee" id="ENSG00000205307">
    <property type="expression patterns" value="Expressed in granulocyte and 94 other cell types or tissues"/>
</dbReference>
<dbReference type="ExpressionAtlas" id="Q8TEE9">
    <property type="expression patterns" value="baseline and differential"/>
</dbReference>
<dbReference type="GO" id="GO:0005737">
    <property type="term" value="C:cytoplasm"/>
    <property type="evidence" value="ECO:0007669"/>
    <property type="project" value="UniProtKB-SubCell"/>
</dbReference>
<dbReference type="GO" id="GO:0005634">
    <property type="term" value="C:nucleus"/>
    <property type="evidence" value="ECO:0007669"/>
    <property type="project" value="UniProtKB-SubCell"/>
</dbReference>
<dbReference type="GO" id="GO:0006355">
    <property type="term" value="P:regulation of DNA-templated transcription"/>
    <property type="evidence" value="ECO:0007669"/>
    <property type="project" value="InterPro"/>
</dbReference>
<dbReference type="Gene3D" id="6.10.140.710">
    <property type="match status" value="1"/>
</dbReference>
<dbReference type="InterPro" id="IPR029163">
    <property type="entry name" value="SAP25"/>
</dbReference>
<dbReference type="PANTHER" id="PTHR39231">
    <property type="entry name" value="HISTONE DEACETYLASE COMPLEX SUBUNIT SAP25"/>
    <property type="match status" value="1"/>
</dbReference>
<dbReference type="PANTHER" id="PTHR39231:SF1">
    <property type="entry name" value="HISTONE DEACETYLASE COMPLEX SUBUNIT SAP25"/>
    <property type="match status" value="1"/>
</dbReference>
<dbReference type="Pfam" id="PF15476">
    <property type="entry name" value="SAP25"/>
    <property type="match status" value="1"/>
</dbReference>
<keyword id="KW-0963">Cytoplasm</keyword>
<keyword id="KW-0539">Nucleus</keyword>
<keyword id="KW-1267">Proteomics identification</keyword>
<keyword id="KW-1185">Reference proteome</keyword>
<keyword id="KW-0678">Repressor</keyword>
<keyword id="KW-0804">Transcription</keyword>
<keyword id="KW-0805">Transcription regulation</keyword>
<organism>
    <name type="scientific">Homo sapiens</name>
    <name type="common">Human</name>
    <dbReference type="NCBI Taxonomy" id="9606"/>
    <lineage>
        <taxon>Eukaryota</taxon>
        <taxon>Metazoa</taxon>
        <taxon>Chordata</taxon>
        <taxon>Craniata</taxon>
        <taxon>Vertebrata</taxon>
        <taxon>Euteleostomi</taxon>
        <taxon>Mammalia</taxon>
        <taxon>Eutheria</taxon>
        <taxon>Euarchontoglires</taxon>
        <taxon>Primates</taxon>
        <taxon>Haplorrhini</taxon>
        <taxon>Catarrhini</taxon>
        <taxon>Hominidae</taxon>
        <taxon>Homo</taxon>
    </lineage>
</organism>
<accession>Q8TEE9</accession>
<proteinExistence type="evidence at protein level"/>
<protein>
    <recommendedName>
        <fullName>Histone deacetylase complex subunit SAP25</fullName>
    </recommendedName>
    <alternativeName>
        <fullName>25 kDa Sin3-associated polypeptide</fullName>
    </alternativeName>
    <alternativeName>
        <fullName>Sin3 corepressor complex subunit SAP25</fullName>
    </alternativeName>
</protein>
<evidence type="ECO:0000250" key="1"/>
<evidence type="ECO:0000256" key="2">
    <source>
        <dbReference type="SAM" id="MobiDB-lite"/>
    </source>
</evidence>
<evidence type="ECO:0000305" key="3"/>
<name>SAP25_HUMAN</name>
<reference key="1">
    <citation type="journal article" date="2004" name="Nat. Genet.">
        <title>Complete sequencing and characterization of 21,243 full-length human cDNAs.</title>
        <authorList>
            <person name="Ota T."/>
            <person name="Suzuki Y."/>
            <person name="Nishikawa T."/>
            <person name="Otsuki T."/>
            <person name="Sugiyama T."/>
            <person name="Irie R."/>
            <person name="Wakamatsu A."/>
            <person name="Hayashi K."/>
            <person name="Sato H."/>
            <person name="Nagai K."/>
            <person name="Kimura K."/>
            <person name="Makita H."/>
            <person name="Sekine M."/>
            <person name="Obayashi M."/>
            <person name="Nishi T."/>
            <person name="Shibahara T."/>
            <person name="Tanaka T."/>
            <person name="Ishii S."/>
            <person name="Yamamoto J."/>
            <person name="Saito K."/>
            <person name="Kawai Y."/>
            <person name="Isono Y."/>
            <person name="Nakamura Y."/>
            <person name="Nagahari K."/>
            <person name="Murakami K."/>
            <person name="Yasuda T."/>
            <person name="Iwayanagi T."/>
            <person name="Wagatsuma M."/>
            <person name="Shiratori A."/>
            <person name="Sudo H."/>
            <person name="Hosoiri T."/>
            <person name="Kaku Y."/>
            <person name="Kodaira H."/>
            <person name="Kondo H."/>
            <person name="Sugawara M."/>
            <person name="Takahashi M."/>
            <person name="Kanda K."/>
            <person name="Yokoi T."/>
            <person name="Furuya T."/>
            <person name="Kikkawa E."/>
            <person name="Omura Y."/>
            <person name="Abe K."/>
            <person name="Kamihara K."/>
            <person name="Katsuta N."/>
            <person name="Sato K."/>
            <person name="Tanikawa M."/>
            <person name="Yamazaki M."/>
            <person name="Ninomiya K."/>
            <person name="Ishibashi T."/>
            <person name="Yamashita H."/>
            <person name="Murakawa K."/>
            <person name="Fujimori K."/>
            <person name="Tanai H."/>
            <person name="Kimata M."/>
            <person name="Watanabe M."/>
            <person name="Hiraoka S."/>
            <person name="Chiba Y."/>
            <person name="Ishida S."/>
            <person name="Ono Y."/>
            <person name="Takiguchi S."/>
            <person name="Watanabe S."/>
            <person name="Yosida M."/>
            <person name="Hotuta T."/>
            <person name="Kusano J."/>
            <person name="Kanehori K."/>
            <person name="Takahashi-Fujii A."/>
            <person name="Hara H."/>
            <person name="Tanase T.-O."/>
            <person name="Nomura Y."/>
            <person name="Togiya S."/>
            <person name="Komai F."/>
            <person name="Hara R."/>
            <person name="Takeuchi K."/>
            <person name="Arita M."/>
            <person name="Imose N."/>
            <person name="Musashino K."/>
            <person name="Yuuki H."/>
            <person name="Oshima A."/>
            <person name="Sasaki N."/>
            <person name="Aotsuka S."/>
            <person name="Yoshikawa Y."/>
            <person name="Matsunawa H."/>
            <person name="Ichihara T."/>
            <person name="Shiohata N."/>
            <person name="Sano S."/>
            <person name="Moriya S."/>
            <person name="Momiyama H."/>
            <person name="Satoh N."/>
            <person name="Takami S."/>
            <person name="Terashima Y."/>
            <person name="Suzuki O."/>
            <person name="Nakagawa S."/>
            <person name="Senoh A."/>
            <person name="Mizoguchi H."/>
            <person name="Goto Y."/>
            <person name="Shimizu F."/>
            <person name="Wakebe H."/>
            <person name="Hishigaki H."/>
            <person name="Watanabe T."/>
            <person name="Sugiyama A."/>
            <person name="Takemoto M."/>
            <person name="Kawakami B."/>
            <person name="Yamazaki M."/>
            <person name="Watanabe K."/>
            <person name="Kumagai A."/>
            <person name="Itakura S."/>
            <person name="Fukuzumi Y."/>
            <person name="Fujimori Y."/>
            <person name="Komiyama M."/>
            <person name="Tashiro H."/>
            <person name="Tanigami A."/>
            <person name="Fujiwara T."/>
            <person name="Ono T."/>
            <person name="Yamada K."/>
            <person name="Fujii Y."/>
            <person name="Ozaki K."/>
            <person name="Hirao M."/>
            <person name="Ohmori Y."/>
            <person name="Kawabata A."/>
            <person name="Hikiji T."/>
            <person name="Kobatake N."/>
            <person name="Inagaki H."/>
            <person name="Ikema Y."/>
            <person name="Okamoto S."/>
            <person name="Okitani R."/>
            <person name="Kawakami T."/>
            <person name="Noguchi S."/>
            <person name="Itoh T."/>
            <person name="Shigeta K."/>
            <person name="Senba T."/>
            <person name="Matsumura K."/>
            <person name="Nakajima Y."/>
            <person name="Mizuno T."/>
            <person name="Morinaga M."/>
            <person name="Sasaki M."/>
            <person name="Togashi T."/>
            <person name="Oyama M."/>
            <person name="Hata H."/>
            <person name="Watanabe M."/>
            <person name="Komatsu T."/>
            <person name="Mizushima-Sugano J."/>
            <person name="Satoh T."/>
            <person name="Shirai Y."/>
            <person name="Takahashi Y."/>
            <person name="Nakagawa K."/>
            <person name="Okumura K."/>
            <person name="Nagase T."/>
            <person name="Nomura N."/>
            <person name="Kikuchi H."/>
            <person name="Masuho Y."/>
            <person name="Yamashita R."/>
            <person name="Nakai K."/>
            <person name="Yada T."/>
            <person name="Nakamura Y."/>
            <person name="Ohara O."/>
            <person name="Isogai T."/>
            <person name="Sugano S."/>
        </authorList>
    </citation>
    <scope>NUCLEOTIDE SEQUENCE [LARGE SCALE MRNA]</scope>
    <source>
        <tissue>Spleen</tissue>
    </source>
</reference>
<reference key="2">
    <citation type="journal article" date="2004" name="Genome Res.">
        <title>The status, quality, and expansion of the NIH full-length cDNA project: the Mammalian Gene Collection (MGC).</title>
        <authorList>
            <consortium name="The MGC Project Team"/>
        </authorList>
    </citation>
    <scope>NUCLEOTIDE SEQUENCE [LARGE SCALE MRNA]</scope>
    <source>
        <tissue>Leukocyte</tissue>
    </source>
</reference>
<reference key="3">
    <citation type="journal article" date="2006" name="Mol. Cell. Biol.">
        <title>Identification and characterization of SAP25, a novel component of the mSin3 corepressor complex.</title>
        <authorList>
            <person name="Shiio Y."/>
            <person name="Rose D.W."/>
            <person name="Aur R."/>
            <person name="Donohoe S."/>
            <person name="Aebersold R."/>
            <person name="Eisenman R.N."/>
        </authorList>
    </citation>
    <scope>INTERACTION WITH SIN3A</scope>
</reference>
<comment type="function">
    <text evidence="1">Involved in the transcriptional repression mediated by the mSIN3A but not the N-CoR corepressor complex.</text>
</comment>
<comment type="subunit">
    <text evidence="1">May be a component of the mSIN3A corepressor complex. Interacts with SIN3A. Interacts with HDAC2 (By similarity).</text>
</comment>
<comment type="subcellular location">
    <subcellularLocation>
        <location evidence="1">Nucleus</location>
    </subcellularLocation>
    <subcellularLocation>
        <location evidence="1">Cytoplasm</location>
    </subcellularLocation>
    <text evidence="1">Shuttles between the nucleus and the cytoplasm.</text>
</comment>
<comment type="sequence caution" evidence="3">
    <conflict type="miscellaneous discrepancy">
        <sequence resource="EMBL-CDS" id="BAB85001"/>
    </conflict>
    <text>Intron retention.</text>
</comment>
<feature type="chain" id="PRO_0000350873" description="Histone deacetylase complex subunit SAP25">
    <location>
        <begin position="1"/>
        <end position="199"/>
    </location>
</feature>
<feature type="region of interest" description="Disordered" evidence="2">
    <location>
        <begin position="151"/>
        <end position="199"/>
    </location>
</feature>
<feature type="compositionally biased region" description="Polar residues" evidence="2">
    <location>
        <begin position="151"/>
        <end position="163"/>
    </location>
</feature>
<feature type="compositionally biased region" description="Polar residues" evidence="2">
    <location>
        <begin position="184"/>
        <end position="199"/>
    </location>
</feature>
<sequence>MTPLAPWDPKYEAKAGPRPVWGANCSSGASFSGRTLCHPSFWPLYEAASGRGLRPVAPATGHWNGQQAPPDAGFPVVCCEDVFLSDPLLPRGQRVPLYLSKAPQQMMGSLKLLPPPPIMSARVLPRPSPSRGPSTAWLSGPELIALTGLLQMSQGEPRPSSSAVGPPDHTSDPPSPCGSPSSSQGADLSLPQTPDTHCP</sequence>